<name>RL27_DESAL</name>
<dbReference type="EMBL" id="CP001322">
    <property type="protein sequence ID" value="ACL05800.1"/>
    <property type="molecule type" value="Genomic_DNA"/>
</dbReference>
<dbReference type="RefSeq" id="WP_015948848.1">
    <property type="nucleotide sequence ID" value="NC_011768.1"/>
</dbReference>
<dbReference type="SMR" id="B8FM67"/>
<dbReference type="KEGG" id="dal:Dalk_4115"/>
<dbReference type="eggNOG" id="COG0211">
    <property type="taxonomic scope" value="Bacteria"/>
</dbReference>
<dbReference type="HOGENOM" id="CLU_095424_4_0_7"/>
<dbReference type="Proteomes" id="UP000000739">
    <property type="component" value="Chromosome"/>
</dbReference>
<dbReference type="GO" id="GO:0022625">
    <property type="term" value="C:cytosolic large ribosomal subunit"/>
    <property type="evidence" value="ECO:0007669"/>
    <property type="project" value="TreeGrafter"/>
</dbReference>
<dbReference type="GO" id="GO:0003735">
    <property type="term" value="F:structural constituent of ribosome"/>
    <property type="evidence" value="ECO:0007669"/>
    <property type="project" value="InterPro"/>
</dbReference>
<dbReference type="GO" id="GO:0006412">
    <property type="term" value="P:translation"/>
    <property type="evidence" value="ECO:0007669"/>
    <property type="project" value="UniProtKB-UniRule"/>
</dbReference>
<dbReference type="FunFam" id="2.40.50.100:FF:000004">
    <property type="entry name" value="50S ribosomal protein L27"/>
    <property type="match status" value="1"/>
</dbReference>
<dbReference type="Gene3D" id="2.40.50.100">
    <property type="match status" value="1"/>
</dbReference>
<dbReference type="HAMAP" id="MF_00539">
    <property type="entry name" value="Ribosomal_bL27"/>
    <property type="match status" value="1"/>
</dbReference>
<dbReference type="InterPro" id="IPR001684">
    <property type="entry name" value="Ribosomal_bL27"/>
</dbReference>
<dbReference type="NCBIfam" id="TIGR00062">
    <property type="entry name" value="L27"/>
    <property type="match status" value="1"/>
</dbReference>
<dbReference type="PANTHER" id="PTHR15893:SF0">
    <property type="entry name" value="LARGE RIBOSOMAL SUBUNIT PROTEIN BL27M"/>
    <property type="match status" value="1"/>
</dbReference>
<dbReference type="PANTHER" id="PTHR15893">
    <property type="entry name" value="RIBOSOMAL PROTEIN L27"/>
    <property type="match status" value="1"/>
</dbReference>
<dbReference type="Pfam" id="PF01016">
    <property type="entry name" value="Ribosomal_L27"/>
    <property type="match status" value="1"/>
</dbReference>
<dbReference type="PRINTS" id="PR00063">
    <property type="entry name" value="RIBOSOMALL27"/>
</dbReference>
<dbReference type="SUPFAM" id="SSF110324">
    <property type="entry name" value="Ribosomal L27 protein-like"/>
    <property type="match status" value="1"/>
</dbReference>
<reference key="1">
    <citation type="journal article" date="2012" name="Environ. Microbiol.">
        <title>The genome sequence of Desulfatibacillum alkenivorans AK-01: a blueprint for anaerobic alkane oxidation.</title>
        <authorList>
            <person name="Callaghan A.V."/>
            <person name="Morris B.E."/>
            <person name="Pereira I.A."/>
            <person name="McInerney M.J."/>
            <person name="Austin R.N."/>
            <person name="Groves J.T."/>
            <person name="Kukor J.J."/>
            <person name="Suflita J.M."/>
            <person name="Young L.Y."/>
            <person name="Zylstra G.J."/>
            <person name="Wawrik B."/>
        </authorList>
    </citation>
    <scope>NUCLEOTIDE SEQUENCE [LARGE SCALE GENOMIC DNA]</scope>
    <source>
        <strain>AK-01</strain>
    </source>
</reference>
<evidence type="ECO:0000255" key="1">
    <source>
        <dbReference type="HAMAP-Rule" id="MF_00539"/>
    </source>
</evidence>
<evidence type="ECO:0000256" key="2">
    <source>
        <dbReference type="SAM" id="MobiDB-lite"/>
    </source>
</evidence>
<evidence type="ECO:0000305" key="3"/>
<protein>
    <recommendedName>
        <fullName evidence="1">Large ribosomal subunit protein bL27</fullName>
    </recommendedName>
    <alternativeName>
        <fullName evidence="3">50S ribosomal protein L27</fullName>
    </alternativeName>
</protein>
<keyword id="KW-1185">Reference proteome</keyword>
<keyword id="KW-0687">Ribonucleoprotein</keyword>
<keyword id="KW-0689">Ribosomal protein</keyword>
<comment type="similarity">
    <text evidence="1">Belongs to the bacterial ribosomal protein bL27 family.</text>
</comment>
<accession>B8FM67</accession>
<proteinExistence type="inferred from homology"/>
<gene>
    <name evidence="1" type="primary">rpmA</name>
    <name type="ordered locus">Dalk_4115</name>
</gene>
<sequence>MAHKKAGGSSRNGRDSNGQRRGVKRYGGEIVRAGNILVRQVGTRIHPGENVGMGRDYTLFATIDGKVAYERKGRDKKKVSVYPV</sequence>
<feature type="chain" id="PRO_1000128733" description="Large ribosomal subunit protein bL27">
    <location>
        <begin position="1"/>
        <end position="84"/>
    </location>
</feature>
<feature type="region of interest" description="Disordered" evidence="2">
    <location>
        <begin position="1"/>
        <end position="25"/>
    </location>
</feature>
<organism>
    <name type="scientific">Desulfatibacillum aliphaticivorans</name>
    <dbReference type="NCBI Taxonomy" id="218208"/>
    <lineage>
        <taxon>Bacteria</taxon>
        <taxon>Pseudomonadati</taxon>
        <taxon>Thermodesulfobacteriota</taxon>
        <taxon>Desulfobacteria</taxon>
        <taxon>Desulfobacterales</taxon>
        <taxon>Desulfatibacillaceae</taxon>
        <taxon>Desulfatibacillum</taxon>
    </lineage>
</organism>